<comment type="function">
    <text evidence="1">Inhibits peptide loading of MHC class I molecules by transporters associated with antigen processing (TAP). Does not prevent peptide binding to TAP, but binds to the lumenal side of the TAP complex and inhibits peptide translocation by specifically blocking ATP-binding to TAP1, but not TAP2. Also prevents the conformational rearrangement of TAP induced by peptide binding. In consequence, infected cells are masked for immune recognition by cytotoxic T-lymphocytes (By similarity).</text>
</comment>
<comment type="subcellular location">
    <subcellularLocation>
        <location evidence="1">Host endoplasmic reticulum membrane</location>
        <topology evidence="1">Single-pass type I membrane protein</topology>
    </subcellularLocation>
</comment>
<comment type="developmental stage">
    <text>Expressed at early period of virus infection.</text>
</comment>
<comment type="domain">
    <text evidence="1">The ER-lumenal domain is responsible for TAP inhibition. It is sufficient to inhibit ATP binding to TAP (By similarity).</text>
</comment>
<comment type="similarity">
    <text evidence="3">Belongs to the cytomegalovirus US6 family.</text>
</comment>
<feature type="signal peptide" evidence="2">
    <location>
        <begin position="1"/>
        <end position="19"/>
    </location>
</feature>
<feature type="chain" id="PRO_0000037439" description="Unique short US6 glycoprotein">
    <location>
        <begin position="20"/>
        <end position="183"/>
    </location>
</feature>
<feature type="topological domain" description="Lumenal" evidence="2">
    <location>
        <begin position="20"/>
        <end position="144"/>
    </location>
</feature>
<feature type="transmembrane region" description="Helical" evidence="2">
    <location>
        <begin position="145"/>
        <end position="165"/>
    </location>
</feature>
<feature type="topological domain" description="Cytoplasmic" evidence="2">
    <location>
        <begin position="166"/>
        <end position="183"/>
    </location>
</feature>
<feature type="domain" description="Ig-like H-type">
    <location>
        <begin position="30"/>
        <end position="131"/>
    </location>
</feature>
<feature type="glycosylation site" description="N-linked (GlcNAc...) asparagine; by host" evidence="2">
    <location>
        <position position="52"/>
    </location>
</feature>
<feature type="disulfide bond" evidence="1">
    <location>
        <begin position="39"/>
        <end position="127"/>
    </location>
</feature>
<keyword id="KW-1015">Disulfide bond</keyword>
<keyword id="KW-0244">Early protein</keyword>
<keyword id="KW-0325">Glycoprotein</keyword>
<keyword id="KW-1038">Host endoplasmic reticulum</keyword>
<keyword id="KW-1043">Host membrane</keyword>
<keyword id="KW-0945">Host-virus interaction</keyword>
<keyword id="KW-0393">Immunoglobulin domain</keyword>
<keyword id="KW-1080">Inhibition of host adaptive immune response by virus</keyword>
<keyword id="KW-1107">Inhibition of host TAP by virus</keyword>
<keyword id="KW-0472">Membrane</keyword>
<keyword id="KW-0732">Signal</keyword>
<keyword id="KW-0812">Transmembrane</keyword>
<keyword id="KW-1133">Transmembrane helix</keyword>
<keyword id="KW-0899">Viral immunoevasion</keyword>
<accession>P60528</accession>
<proteinExistence type="evidence at transcript level"/>
<protein>
    <recommendedName>
        <fullName>Unique short US6 glycoprotein</fullName>
    </recommendedName>
    <alternativeName>
        <fullName>HXLF6</fullName>
    </alternativeName>
    <alternativeName>
        <fullName>gpUS6</fullName>
    </alternativeName>
</protein>
<dbReference type="EMBL" id="AY072775">
    <property type="protein sequence ID" value="AAL67143.1"/>
    <property type="molecule type" value="Genomic_DNA"/>
</dbReference>
<dbReference type="SMR" id="P60528"/>
<dbReference type="GlyCosmos" id="P60528">
    <property type="glycosylation" value="1 site, No reported glycans"/>
</dbReference>
<dbReference type="GO" id="GO:0044167">
    <property type="term" value="C:host cell endoplasmic reticulum membrane"/>
    <property type="evidence" value="ECO:0007669"/>
    <property type="project" value="UniProtKB-SubCell"/>
</dbReference>
<dbReference type="GO" id="GO:0016020">
    <property type="term" value="C:membrane"/>
    <property type="evidence" value="ECO:0007669"/>
    <property type="project" value="UniProtKB-KW"/>
</dbReference>
<dbReference type="GO" id="GO:0039588">
    <property type="term" value="P:symbiont-mediated suppression of host antigen processing and presentation"/>
    <property type="evidence" value="ECO:0007669"/>
    <property type="project" value="UniProtKB-KW"/>
</dbReference>
<dbReference type="InterPro" id="IPR035129">
    <property type="entry name" value="US6"/>
</dbReference>
<dbReference type="Pfam" id="PF17616">
    <property type="entry name" value="US6"/>
    <property type="match status" value="1"/>
</dbReference>
<sequence length="183" mass="20639">MDLLIRLGFLLMCALPTPGERSSRDPKTLLSLSPRQQACVPRTKSHRPVCYNDTGDCTDADDSWKQLGEDFAHQCLQAAKKRPKTHKSRPNDRNLEGRLTCQRVRRLLPCDLDIHPSHRLLTLMNNCVCDGAVWNAFRLIERHGFFAVTLYLCCGITLLVVILALLCSITYESTGRGIRRCGS</sequence>
<name>US06_HCMVT</name>
<evidence type="ECO:0000250" key="1"/>
<evidence type="ECO:0000255" key="2"/>
<evidence type="ECO:0000305" key="3"/>
<gene>
    <name type="primary">US6</name>
</gene>
<organism>
    <name type="scientific">Human cytomegalovirus (strain Towne)</name>
    <name type="common">HHV-5</name>
    <name type="synonym">Human herpesvirus 5</name>
    <dbReference type="NCBI Taxonomy" id="10363"/>
    <lineage>
        <taxon>Viruses</taxon>
        <taxon>Duplodnaviria</taxon>
        <taxon>Heunggongvirae</taxon>
        <taxon>Peploviricota</taxon>
        <taxon>Herviviricetes</taxon>
        <taxon>Herpesvirales</taxon>
        <taxon>Orthoherpesviridae</taxon>
        <taxon>Betaherpesvirinae</taxon>
        <taxon>Cytomegalovirus</taxon>
        <taxon>Cytomegalovirus humanbeta5</taxon>
        <taxon>Human cytomegalovirus</taxon>
    </lineage>
</organism>
<organismHost>
    <name type="scientific">Homo sapiens</name>
    <name type="common">Human</name>
    <dbReference type="NCBI Taxonomy" id="9606"/>
</organismHost>
<reference key="1">
    <citation type="journal article" date="2003" name="Xenotransplantation">
        <title>Exploiting virus stealth technology for xenotransplantation: reduced human T cell responses to porcine cells expressing herpes simplex virus ICP47.</title>
        <authorList>
            <person name="Crew M.D."/>
            <person name="Phanavanh B."/>
        </authorList>
    </citation>
    <scope>NUCLEOTIDE SEQUENCE [GENOMIC DNA]</scope>
</reference>